<name>DAPF_BART1</name>
<organism>
    <name type="scientific">Bartonella tribocorum (strain CIP 105476 / IBS 506)</name>
    <dbReference type="NCBI Taxonomy" id="382640"/>
    <lineage>
        <taxon>Bacteria</taxon>
        <taxon>Pseudomonadati</taxon>
        <taxon>Pseudomonadota</taxon>
        <taxon>Alphaproteobacteria</taxon>
        <taxon>Hyphomicrobiales</taxon>
        <taxon>Bartonellaceae</taxon>
        <taxon>Bartonella</taxon>
    </lineage>
</organism>
<dbReference type="EC" id="5.1.1.7" evidence="1"/>
<dbReference type="EMBL" id="AM260525">
    <property type="protein sequence ID" value="CAK02629.1"/>
    <property type="molecule type" value="Genomic_DNA"/>
</dbReference>
<dbReference type="RefSeq" id="WP_012232622.1">
    <property type="nucleotide sequence ID" value="NC_010161.1"/>
</dbReference>
<dbReference type="SMR" id="A9IZW1"/>
<dbReference type="KEGG" id="btr:BT_2682"/>
<dbReference type="eggNOG" id="COG0253">
    <property type="taxonomic scope" value="Bacteria"/>
</dbReference>
<dbReference type="HOGENOM" id="CLU_053306_1_0_5"/>
<dbReference type="UniPathway" id="UPA00034">
    <property type="reaction ID" value="UER00025"/>
</dbReference>
<dbReference type="Proteomes" id="UP000001592">
    <property type="component" value="Chromosome"/>
</dbReference>
<dbReference type="GO" id="GO:0005829">
    <property type="term" value="C:cytosol"/>
    <property type="evidence" value="ECO:0007669"/>
    <property type="project" value="TreeGrafter"/>
</dbReference>
<dbReference type="GO" id="GO:0008837">
    <property type="term" value="F:diaminopimelate epimerase activity"/>
    <property type="evidence" value="ECO:0007669"/>
    <property type="project" value="UniProtKB-UniRule"/>
</dbReference>
<dbReference type="GO" id="GO:0009089">
    <property type="term" value="P:lysine biosynthetic process via diaminopimelate"/>
    <property type="evidence" value="ECO:0007669"/>
    <property type="project" value="UniProtKB-UniRule"/>
</dbReference>
<dbReference type="Gene3D" id="3.10.310.10">
    <property type="entry name" value="Diaminopimelate Epimerase, Chain A, domain 1"/>
    <property type="match status" value="2"/>
</dbReference>
<dbReference type="HAMAP" id="MF_00197">
    <property type="entry name" value="DAP_epimerase"/>
    <property type="match status" value="1"/>
</dbReference>
<dbReference type="InterPro" id="IPR018510">
    <property type="entry name" value="DAP_epimerase_AS"/>
</dbReference>
<dbReference type="InterPro" id="IPR001653">
    <property type="entry name" value="DAP_epimerase_DapF"/>
</dbReference>
<dbReference type="NCBIfam" id="TIGR00652">
    <property type="entry name" value="DapF"/>
    <property type="match status" value="1"/>
</dbReference>
<dbReference type="PANTHER" id="PTHR31689:SF0">
    <property type="entry name" value="DIAMINOPIMELATE EPIMERASE"/>
    <property type="match status" value="1"/>
</dbReference>
<dbReference type="PANTHER" id="PTHR31689">
    <property type="entry name" value="DIAMINOPIMELATE EPIMERASE, CHLOROPLASTIC"/>
    <property type="match status" value="1"/>
</dbReference>
<dbReference type="Pfam" id="PF01678">
    <property type="entry name" value="DAP_epimerase"/>
    <property type="match status" value="2"/>
</dbReference>
<dbReference type="SUPFAM" id="SSF54506">
    <property type="entry name" value="Diaminopimelate epimerase-like"/>
    <property type="match status" value="2"/>
</dbReference>
<dbReference type="PROSITE" id="PS01326">
    <property type="entry name" value="DAP_EPIMERASE"/>
    <property type="match status" value="1"/>
</dbReference>
<evidence type="ECO:0000255" key="1">
    <source>
        <dbReference type="HAMAP-Rule" id="MF_00197"/>
    </source>
</evidence>
<sequence>MKTPFSKMDGLGNQIIVADMRESTQALTPQAILALSADPEMHFDQIMAIRNPTKNEADFHIEIWNADGSKAKACGNGTRCVIAWLTDHNFGENFRLEAPTGIIEGKRQADNLISVDMGCPNFNAKEMPVSREIVDTNHIDITAGPLKDACLISIGNLHAIFFVENDVQHIPLEKYGPKLEHDPLFPERCNISIACITSKKSLNLRTWERGAGLTQACGSAACAGAVAAYRRSLTQRHIDVNLPGGKLNIFYREDDHIIMTGPIKYQFSGFLNPLTGCYKKDNS</sequence>
<gene>
    <name evidence="1" type="primary">dapF</name>
    <name type="ordered locus">BT_2682</name>
</gene>
<reference key="1">
    <citation type="journal article" date="2007" name="Nat. Genet.">
        <title>Genomic analysis of Bartonella identifies type IV secretion systems as host adaptability factors.</title>
        <authorList>
            <person name="Saenz H.L."/>
            <person name="Engel P."/>
            <person name="Stoeckli M.C."/>
            <person name="Lanz C."/>
            <person name="Raddatz G."/>
            <person name="Vayssier-Taussat M."/>
            <person name="Birtles R."/>
            <person name="Schuster S.C."/>
            <person name="Dehio C."/>
        </authorList>
    </citation>
    <scope>NUCLEOTIDE SEQUENCE [LARGE SCALE GENOMIC DNA]</scope>
    <source>
        <strain>CIP 105476 / IBS 506</strain>
    </source>
</reference>
<protein>
    <recommendedName>
        <fullName evidence="1">Diaminopimelate epimerase</fullName>
        <shortName evidence="1">DAP epimerase</shortName>
        <ecNumber evidence="1">5.1.1.7</ecNumber>
    </recommendedName>
    <alternativeName>
        <fullName evidence="1">PLP-independent amino acid racemase</fullName>
    </alternativeName>
</protein>
<comment type="function">
    <text evidence="1">Catalyzes the stereoinversion of LL-2,6-diaminopimelate (L,L-DAP) to meso-diaminopimelate (meso-DAP), a precursor of L-lysine and an essential component of the bacterial peptidoglycan.</text>
</comment>
<comment type="catalytic activity">
    <reaction evidence="1">
        <text>(2S,6S)-2,6-diaminopimelate = meso-2,6-diaminopimelate</text>
        <dbReference type="Rhea" id="RHEA:15393"/>
        <dbReference type="ChEBI" id="CHEBI:57609"/>
        <dbReference type="ChEBI" id="CHEBI:57791"/>
        <dbReference type="EC" id="5.1.1.7"/>
    </reaction>
</comment>
<comment type="pathway">
    <text evidence="1">Amino-acid biosynthesis; L-lysine biosynthesis via DAP pathway; DL-2,6-diaminopimelate from LL-2,6-diaminopimelate: step 1/1.</text>
</comment>
<comment type="subunit">
    <text evidence="1">Homodimer.</text>
</comment>
<comment type="subcellular location">
    <subcellularLocation>
        <location evidence="1">Cytoplasm</location>
    </subcellularLocation>
</comment>
<comment type="similarity">
    <text evidence="1">Belongs to the diaminopimelate epimerase family.</text>
</comment>
<keyword id="KW-0028">Amino-acid biosynthesis</keyword>
<keyword id="KW-0963">Cytoplasm</keyword>
<keyword id="KW-0413">Isomerase</keyword>
<keyword id="KW-0457">Lysine biosynthesis</keyword>
<proteinExistence type="inferred from homology"/>
<feature type="chain" id="PRO_1000077690" description="Diaminopimelate epimerase">
    <location>
        <begin position="1"/>
        <end position="283"/>
    </location>
</feature>
<feature type="active site" description="Proton donor" evidence="1">
    <location>
        <position position="74"/>
    </location>
</feature>
<feature type="active site" description="Proton acceptor" evidence="1">
    <location>
        <position position="217"/>
    </location>
</feature>
<feature type="binding site" evidence="1">
    <location>
        <position position="13"/>
    </location>
    <ligand>
        <name>substrate</name>
    </ligand>
</feature>
<feature type="binding site" evidence="1">
    <location>
        <position position="45"/>
    </location>
    <ligand>
        <name>substrate</name>
    </ligand>
</feature>
<feature type="binding site" evidence="1">
    <location>
        <position position="65"/>
    </location>
    <ligand>
        <name>substrate</name>
    </ligand>
</feature>
<feature type="binding site" evidence="1">
    <location>
        <begin position="75"/>
        <end position="76"/>
    </location>
    <ligand>
        <name>substrate</name>
    </ligand>
</feature>
<feature type="binding site" evidence="1">
    <location>
        <position position="156"/>
    </location>
    <ligand>
        <name>substrate</name>
    </ligand>
</feature>
<feature type="binding site" evidence="1">
    <location>
        <position position="190"/>
    </location>
    <ligand>
        <name>substrate</name>
    </ligand>
</feature>
<feature type="binding site" evidence="1">
    <location>
        <begin position="208"/>
        <end position="209"/>
    </location>
    <ligand>
        <name>substrate</name>
    </ligand>
</feature>
<feature type="binding site" evidence="1">
    <location>
        <begin position="218"/>
        <end position="219"/>
    </location>
    <ligand>
        <name>substrate</name>
    </ligand>
</feature>
<feature type="site" description="Could be important to modulate the pK values of the two catalytic cysteine residues" evidence="1">
    <location>
        <position position="158"/>
    </location>
</feature>
<feature type="site" description="Could be important to modulate the pK values of the two catalytic cysteine residues" evidence="1">
    <location>
        <position position="208"/>
    </location>
</feature>
<accession>A9IZW1</accession>